<evidence type="ECO:0000250" key="1"/>
<evidence type="ECO:0000250" key="2">
    <source>
        <dbReference type="UniProtKB" id="O54924"/>
    </source>
</evidence>
<evidence type="ECO:0000255" key="3">
    <source>
        <dbReference type="PROSITE-ProRule" id="PRU00145"/>
    </source>
</evidence>
<evidence type="ECO:0000256" key="4">
    <source>
        <dbReference type="SAM" id="MobiDB-lite"/>
    </source>
</evidence>
<evidence type="ECO:0000269" key="5">
    <source>
    </source>
</evidence>
<evidence type="ECO:0000269" key="6">
    <source>
    </source>
</evidence>
<evidence type="ECO:0000269" key="7">
    <source>
    </source>
</evidence>
<evidence type="ECO:0000269" key="8">
    <source>
    </source>
</evidence>
<evidence type="ECO:0000269" key="9">
    <source>
    </source>
</evidence>
<evidence type="ECO:0000305" key="10"/>
<evidence type="ECO:0007744" key="11">
    <source>
    </source>
</evidence>
<evidence type="ECO:0007744" key="12">
    <source>
    </source>
</evidence>
<dbReference type="EMBL" id="AK096460">
    <property type="protein sequence ID" value="BAG53295.1"/>
    <property type="molecule type" value="mRNA"/>
</dbReference>
<dbReference type="EMBL" id="AL117352">
    <property type="status" value="NOT_ANNOTATED_CDS"/>
    <property type="molecule type" value="Genomic_DNA"/>
</dbReference>
<dbReference type="EMBL" id="CH471098">
    <property type="protein sequence ID" value="EAW69955.1"/>
    <property type="molecule type" value="Genomic_DNA"/>
</dbReference>
<dbReference type="EMBL" id="BC035763">
    <property type="protein sequence ID" value="AAH35763.2"/>
    <property type="molecule type" value="mRNA"/>
</dbReference>
<dbReference type="CCDS" id="CCDS1593.1"/>
<dbReference type="RefSeq" id="NP_787072.2">
    <property type="nucleotide sequence ID" value="NM_175876.4"/>
</dbReference>
<dbReference type="SMR" id="Q8IYI6"/>
<dbReference type="BioGRID" id="127206">
    <property type="interactions" value="155"/>
</dbReference>
<dbReference type="ComplexPortal" id="CPX-4943">
    <property type="entry name" value="Exocyst, EXOC6 variant"/>
</dbReference>
<dbReference type="ComplexPortal" id="CPX-4944">
    <property type="entry name" value="Exocyst, EXOC6B variant"/>
</dbReference>
<dbReference type="CORUM" id="Q8IYI6"/>
<dbReference type="FunCoup" id="Q8IYI6">
    <property type="interactions" value="3181"/>
</dbReference>
<dbReference type="IntAct" id="Q8IYI6">
    <property type="interactions" value="128"/>
</dbReference>
<dbReference type="MINT" id="Q8IYI6"/>
<dbReference type="STRING" id="9606.ENSP00000355605"/>
<dbReference type="TCDB" id="1.F.2.1.2">
    <property type="family name" value="the octameric exocyst (exocyst) family"/>
</dbReference>
<dbReference type="GlyGen" id="Q8IYI6">
    <property type="glycosylation" value="1 site, 1 O-linked glycan (1 site)"/>
</dbReference>
<dbReference type="iPTMnet" id="Q8IYI6"/>
<dbReference type="PhosphoSitePlus" id="Q8IYI6"/>
<dbReference type="SwissPalm" id="Q8IYI6"/>
<dbReference type="BioMuta" id="EXOC8"/>
<dbReference type="DMDM" id="74750763"/>
<dbReference type="jPOST" id="Q8IYI6"/>
<dbReference type="MassIVE" id="Q8IYI6"/>
<dbReference type="PaxDb" id="9606-ENSP00000355605"/>
<dbReference type="PeptideAtlas" id="Q8IYI6"/>
<dbReference type="ProteomicsDB" id="71180"/>
<dbReference type="Pumba" id="Q8IYI6"/>
<dbReference type="Antibodypedia" id="20797">
    <property type="antibodies" value="89 antibodies from 17 providers"/>
</dbReference>
<dbReference type="DNASU" id="149371"/>
<dbReference type="Ensembl" id="ENST00000366645.1">
    <property type="protein sequence ID" value="ENSP00000355605.2"/>
    <property type="gene ID" value="ENSG00000116903.7"/>
</dbReference>
<dbReference type="GeneID" id="149371"/>
<dbReference type="KEGG" id="hsa:149371"/>
<dbReference type="MANE-Select" id="ENST00000366645.1">
    <property type="protein sequence ID" value="ENSP00000355605.2"/>
    <property type="RefSeq nucleotide sequence ID" value="NM_175876.5"/>
    <property type="RefSeq protein sequence ID" value="NP_787072.2"/>
</dbReference>
<dbReference type="UCSC" id="uc001huq.4">
    <property type="organism name" value="human"/>
</dbReference>
<dbReference type="AGR" id="HGNC:24659"/>
<dbReference type="CTD" id="149371"/>
<dbReference type="DisGeNET" id="149371"/>
<dbReference type="GeneCards" id="EXOC8"/>
<dbReference type="HGNC" id="HGNC:24659">
    <property type="gene designation" value="EXOC8"/>
</dbReference>
<dbReference type="HPA" id="ENSG00000116903">
    <property type="expression patterns" value="Low tissue specificity"/>
</dbReference>
<dbReference type="MalaCards" id="EXOC8"/>
<dbReference type="MIM" id="615283">
    <property type="type" value="gene"/>
</dbReference>
<dbReference type="MIM" id="619076">
    <property type="type" value="phenotype"/>
</dbReference>
<dbReference type="neXtProt" id="NX_Q8IYI6"/>
<dbReference type="OpenTargets" id="ENSG00000116903"/>
<dbReference type="PharmGKB" id="PA134991382"/>
<dbReference type="VEuPathDB" id="HostDB:ENSG00000116903"/>
<dbReference type="eggNOG" id="KOG2215">
    <property type="taxonomic scope" value="Eukaryota"/>
</dbReference>
<dbReference type="GeneTree" id="ENSGT00390000015936"/>
<dbReference type="HOGENOM" id="CLU_025760_0_0_1"/>
<dbReference type="InParanoid" id="Q8IYI6"/>
<dbReference type="OMA" id="AAWLPNR"/>
<dbReference type="OrthoDB" id="642193at2759"/>
<dbReference type="PAN-GO" id="Q8IYI6">
    <property type="GO annotations" value="3 GO annotations based on evolutionary models"/>
</dbReference>
<dbReference type="PhylomeDB" id="Q8IYI6"/>
<dbReference type="TreeFam" id="TF105819"/>
<dbReference type="PathwayCommons" id="Q8IYI6"/>
<dbReference type="Reactome" id="R-HSA-1445148">
    <property type="pathway name" value="Translocation of SLC2A4 (GLUT4) to the plasma membrane"/>
</dbReference>
<dbReference type="Reactome" id="R-HSA-264876">
    <property type="pathway name" value="Insulin processing"/>
</dbReference>
<dbReference type="Reactome" id="R-HSA-5620916">
    <property type="pathway name" value="VxPx cargo-targeting to cilium"/>
</dbReference>
<dbReference type="SignaLink" id="Q8IYI6"/>
<dbReference type="SIGNOR" id="Q8IYI6"/>
<dbReference type="BioGRID-ORCS" id="149371">
    <property type="hits" value="284 hits in 1178 CRISPR screens"/>
</dbReference>
<dbReference type="CD-CODE" id="FB4E32DD">
    <property type="entry name" value="Presynaptic clusters and postsynaptic densities"/>
</dbReference>
<dbReference type="GeneWiki" id="EXOC8"/>
<dbReference type="GenomeRNAi" id="149371"/>
<dbReference type="Pharos" id="Q8IYI6">
    <property type="development level" value="Tbio"/>
</dbReference>
<dbReference type="PRO" id="PR:Q8IYI6"/>
<dbReference type="Proteomes" id="UP000005640">
    <property type="component" value="Chromosome 1"/>
</dbReference>
<dbReference type="RNAct" id="Q8IYI6">
    <property type="molecule type" value="protein"/>
</dbReference>
<dbReference type="Bgee" id="ENSG00000116903">
    <property type="expression patterns" value="Expressed in epithelial cell of pancreas and 195 other cell types or tissues"/>
</dbReference>
<dbReference type="GO" id="GO:0005829">
    <property type="term" value="C:cytosol"/>
    <property type="evidence" value="ECO:0000304"/>
    <property type="project" value="Reactome"/>
</dbReference>
<dbReference type="GO" id="GO:0000145">
    <property type="term" value="C:exocyst"/>
    <property type="evidence" value="ECO:0000314"/>
    <property type="project" value="UniProtKB"/>
</dbReference>
<dbReference type="GO" id="GO:0030426">
    <property type="term" value="C:growth cone"/>
    <property type="evidence" value="ECO:0007669"/>
    <property type="project" value="UniProtKB-SubCell"/>
</dbReference>
<dbReference type="GO" id="GO:0005770">
    <property type="term" value="C:late endosome"/>
    <property type="evidence" value="ECO:0000314"/>
    <property type="project" value="UniProtKB"/>
</dbReference>
<dbReference type="GO" id="GO:0016020">
    <property type="term" value="C:membrane"/>
    <property type="evidence" value="ECO:0007005"/>
    <property type="project" value="UniProtKB"/>
</dbReference>
<dbReference type="GO" id="GO:0048471">
    <property type="term" value="C:perinuclear region of cytoplasm"/>
    <property type="evidence" value="ECO:0007669"/>
    <property type="project" value="UniProtKB-SubCell"/>
</dbReference>
<dbReference type="GO" id="GO:0005886">
    <property type="term" value="C:plasma membrane"/>
    <property type="evidence" value="ECO:0000304"/>
    <property type="project" value="Reactome"/>
</dbReference>
<dbReference type="GO" id="GO:0035091">
    <property type="term" value="F:phosphatidylinositol binding"/>
    <property type="evidence" value="ECO:0000314"/>
    <property type="project" value="MGI"/>
</dbReference>
<dbReference type="GO" id="GO:0031267">
    <property type="term" value="F:small GTPase binding"/>
    <property type="evidence" value="ECO:0000314"/>
    <property type="project" value="MGI"/>
</dbReference>
<dbReference type="GO" id="GO:0007032">
    <property type="term" value="P:endosome organization"/>
    <property type="evidence" value="ECO:0000315"/>
    <property type="project" value="UniProtKB"/>
</dbReference>
<dbReference type="GO" id="GO:0006887">
    <property type="term" value="P:exocytosis"/>
    <property type="evidence" value="ECO:0000314"/>
    <property type="project" value="MGI"/>
</dbReference>
<dbReference type="GO" id="GO:0022617">
    <property type="term" value="P:extracellular matrix disassembly"/>
    <property type="evidence" value="ECO:0000315"/>
    <property type="project" value="UniProtKB"/>
</dbReference>
<dbReference type="GO" id="GO:0006893">
    <property type="term" value="P:Golgi to plasma membrane transport"/>
    <property type="evidence" value="ECO:0000318"/>
    <property type="project" value="GO_Central"/>
</dbReference>
<dbReference type="GO" id="GO:0090148">
    <property type="term" value="P:membrane fission"/>
    <property type="evidence" value="ECO:0000303"/>
    <property type="project" value="ComplexPortal"/>
</dbReference>
<dbReference type="GO" id="GO:0000281">
    <property type="term" value="P:mitotic cytokinesis"/>
    <property type="evidence" value="ECO:0000303"/>
    <property type="project" value="ComplexPortal"/>
</dbReference>
<dbReference type="GO" id="GO:0008104">
    <property type="term" value="P:protein localization"/>
    <property type="evidence" value="ECO:0000318"/>
    <property type="project" value="GO_Central"/>
</dbReference>
<dbReference type="GO" id="GO:0015031">
    <property type="term" value="P:protein transport"/>
    <property type="evidence" value="ECO:0007669"/>
    <property type="project" value="UniProtKB-KW"/>
</dbReference>
<dbReference type="GO" id="GO:0016241">
    <property type="term" value="P:regulation of macroautophagy"/>
    <property type="evidence" value="ECO:0000304"/>
    <property type="project" value="ParkinsonsUK-UCL"/>
</dbReference>
<dbReference type="GO" id="GO:0006904">
    <property type="term" value="P:vesicle docking involved in exocytosis"/>
    <property type="evidence" value="ECO:0000303"/>
    <property type="project" value="ComplexPortal"/>
</dbReference>
<dbReference type="GO" id="GO:0090522">
    <property type="term" value="P:vesicle tethering involved in exocytosis"/>
    <property type="evidence" value="ECO:0000303"/>
    <property type="project" value="ComplexPortal"/>
</dbReference>
<dbReference type="CDD" id="cd01226">
    <property type="entry name" value="PH_RalBD_exo84"/>
    <property type="match status" value="1"/>
</dbReference>
<dbReference type="FunFam" id="1.20.58.1220:FF:000002">
    <property type="entry name" value="Exocyst complex component 8"/>
    <property type="match status" value="1"/>
</dbReference>
<dbReference type="FunFam" id="2.30.29.30:FF:000180">
    <property type="entry name" value="Exocyst complex component 8"/>
    <property type="match status" value="1"/>
</dbReference>
<dbReference type="FunFam" id="1.20.58.1210:FF:000001">
    <property type="entry name" value="exocyst complex component 8"/>
    <property type="match status" value="1"/>
</dbReference>
<dbReference type="Gene3D" id="1.20.58.1220">
    <property type="entry name" value="Exo84p, C-terminal helical domain"/>
    <property type="match status" value="1"/>
</dbReference>
<dbReference type="Gene3D" id="1.20.58.1210">
    <property type="entry name" value="Exo84p, N-terminal helical domain"/>
    <property type="match status" value="1"/>
</dbReference>
<dbReference type="Gene3D" id="2.30.29.30">
    <property type="entry name" value="Pleckstrin-homology domain (PH domain)/Phosphotyrosine-binding domain (PTB)"/>
    <property type="match status" value="1"/>
</dbReference>
<dbReference type="InterPro" id="IPR016159">
    <property type="entry name" value="Cullin_repeat-like_dom_sf"/>
</dbReference>
<dbReference type="InterPro" id="IPR033961">
    <property type="entry name" value="Exo84"/>
</dbReference>
<dbReference type="InterPro" id="IPR032403">
    <property type="entry name" value="Exo84_C"/>
</dbReference>
<dbReference type="InterPro" id="IPR042561">
    <property type="entry name" value="Exo84_C_1"/>
</dbReference>
<dbReference type="InterPro" id="IPR042560">
    <property type="entry name" value="Exo84_C_2"/>
</dbReference>
<dbReference type="InterPro" id="IPR011993">
    <property type="entry name" value="PH-like_dom_sf"/>
</dbReference>
<dbReference type="InterPro" id="IPR001849">
    <property type="entry name" value="PH_domain"/>
</dbReference>
<dbReference type="PANTHER" id="PTHR21426">
    <property type="entry name" value="EXOCYST COMPLEX COMPONENT 8"/>
    <property type="match status" value="1"/>
</dbReference>
<dbReference type="PANTHER" id="PTHR21426:SF12">
    <property type="entry name" value="EXOCYST COMPLEX COMPONENT 8"/>
    <property type="match status" value="1"/>
</dbReference>
<dbReference type="Pfam" id="PF16528">
    <property type="entry name" value="Exo84_C"/>
    <property type="match status" value="1"/>
</dbReference>
<dbReference type="Pfam" id="PF08700">
    <property type="entry name" value="VPS51_Exo84_N"/>
    <property type="match status" value="1"/>
</dbReference>
<dbReference type="SMART" id="SM00233">
    <property type="entry name" value="PH"/>
    <property type="match status" value="1"/>
</dbReference>
<dbReference type="SUPFAM" id="SSF74788">
    <property type="entry name" value="Cullin repeat-like"/>
    <property type="match status" value="1"/>
</dbReference>
<dbReference type="SUPFAM" id="SSF50729">
    <property type="entry name" value="PH domain-like"/>
    <property type="match status" value="1"/>
</dbReference>
<dbReference type="PROSITE" id="PS50003">
    <property type="entry name" value="PH_DOMAIN"/>
    <property type="match status" value="1"/>
</dbReference>
<name>EXOC8_HUMAN</name>
<comment type="function">
    <text>Component of the exocyst complex involved in the docking of exocytic vesicles with fusion sites on the plasma membrane.</text>
</comment>
<comment type="subunit">
    <text evidence="2 5 6 7">The exocyst complex is composed of EXOC1, EXOC2, EXOC3, EXOC4, EXOC5, EXOC6, EXOC7 and EXOC8 (By similarity). Interacts (via PH domain) with GTP-bound RALA and RALB (PubMed:14525976, PubMed:18756269). Interacts with SH3BP1; required for the localization of both SH3BP1 and the exocyst to the leading edge of migrating cells (PubMed:21658605).</text>
</comment>
<comment type="interaction">
    <interactant intactId="EBI-742102">
        <id>Q8IYI6</id>
    </interactant>
    <interactant intactId="EBI-745226">
        <id>Q13155</id>
        <label>AIMP2</label>
    </interactant>
    <organismsDiffer>false</organismsDiffer>
    <experiments>5</experiments>
</comment>
<comment type="interaction">
    <interactant intactId="EBI-742102">
        <id>Q8IYI6</id>
    </interactant>
    <interactant intactId="EBI-12170453">
        <id>Q8N2N9-4</id>
        <label>ANKRD36B</label>
    </interactant>
    <organismsDiffer>false</organismsDiffer>
    <experiments>3</experiments>
</comment>
<comment type="interaction">
    <interactant intactId="EBI-742102">
        <id>Q8IYI6</id>
    </interactant>
    <interactant intactId="EBI-12811889">
        <id>Q9Y6H3</id>
        <label>ATP23</label>
    </interactant>
    <organismsDiffer>false</organismsDiffer>
    <experiments>3</experiments>
</comment>
<comment type="interaction">
    <interactant intactId="EBI-742102">
        <id>Q8IYI6</id>
    </interactant>
    <interactant intactId="EBI-949378">
        <id>Q14457</id>
        <label>BECN1</label>
    </interactant>
    <organismsDiffer>false</organismsDiffer>
    <experiments>4</experiments>
</comment>
<comment type="interaction">
    <interactant intactId="EBI-742102">
        <id>Q8IYI6</id>
    </interactant>
    <interactant intactId="EBI-745073">
        <id>Q9BXY8</id>
        <label>BEX2</label>
    </interactant>
    <organismsDiffer>false</organismsDiffer>
    <experiments>3</experiments>
</comment>
<comment type="interaction">
    <interactant intactId="EBI-742102">
        <id>Q8IYI6</id>
    </interactant>
    <interactant intactId="EBI-1012434">
        <id>Q6AI39</id>
        <label>BICRAL</label>
    </interactant>
    <organismsDiffer>false</organismsDiffer>
    <experiments>3</experiments>
</comment>
<comment type="interaction">
    <interactant intactId="EBI-742102">
        <id>Q8IYI6</id>
    </interactant>
    <interactant intactId="EBI-465872">
        <id>Q6QNY1</id>
        <label>BLOC1S2</label>
    </interactant>
    <organismsDiffer>false</organismsDiffer>
    <experiments>3</experiments>
</comment>
<comment type="interaction">
    <interactant intactId="EBI-742102">
        <id>Q8IYI6</id>
    </interactant>
    <interactant intactId="EBI-465781">
        <id>Q9UL45</id>
        <label>BLOC1S6</label>
    </interactant>
    <organismsDiffer>false</organismsDiffer>
    <experiments>4</experiments>
</comment>
<comment type="interaction">
    <interactant intactId="EBI-742102">
        <id>Q8IYI6</id>
    </interactant>
    <interactant intactId="EBI-2548012">
        <id>Q9H2G9</id>
        <label>BLZF1</label>
    </interactant>
    <organismsDiffer>false</organismsDiffer>
    <experiments>3</experiments>
</comment>
<comment type="interaction">
    <interactant intactId="EBI-742102">
        <id>Q8IYI6</id>
    </interactant>
    <interactant intactId="EBI-10193358">
        <id>Q96GS4</id>
        <label>BORCS6</label>
    </interactant>
    <organismsDiffer>false</organismsDiffer>
    <experiments>3</experiments>
</comment>
<comment type="interaction">
    <interactant intactId="EBI-742102">
        <id>Q8IYI6</id>
    </interactant>
    <interactant intactId="EBI-11532021">
        <id>P20807-4</id>
        <label>CAPN3</label>
    </interactant>
    <organismsDiffer>false</organismsDiffer>
    <experiments>3</experiments>
</comment>
<comment type="interaction">
    <interactant intactId="EBI-742102">
        <id>Q8IYI6</id>
    </interactant>
    <interactant intactId="EBI-10175300">
        <id>Q8TD31-3</id>
        <label>CCHCR1</label>
    </interactant>
    <organismsDiffer>false</organismsDiffer>
    <experiments>3</experiments>
</comment>
<comment type="interaction">
    <interactant intactId="EBI-742102">
        <id>Q8IYI6</id>
    </interactant>
    <interactant intactId="EBI-10181988">
        <id>Q8IYX8-2</id>
        <label>CEP57L1</label>
    </interactant>
    <organismsDiffer>false</organismsDiffer>
    <experiments>3</experiments>
</comment>
<comment type="interaction">
    <interactant intactId="EBI-742102">
        <id>Q8IYI6</id>
    </interactant>
    <interactant intactId="EBI-5453285">
        <id>Q2TBE0</id>
        <label>CWF19L2</label>
    </interactant>
    <organismsDiffer>false</organismsDiffer>
    <experiments>3</experiments>
</comment>
<comment type="interaction">
    <interactant intactId="EBI-742102">
        <id>Q8IYI6</id>
    </interactant>
    <interactant intactId="EBI-399105">
        <id>Q9NPF5</id>
        <label>DMAP1</label>
    </interactant>
    <organismsDiffer>false</organismsDiffer>
    <experiments>3</experiments>
</comment>
<comment type="interaction">
    <interactant intactId="EBI-742102">
        <id>Q8IYI6</id>
    </interactant>
    <interactant intactId="EBI-395274">
        <id>O00472</id>
        <label>ELL2</label>
    </interactant>
    <organismsDiffer>false</organismsDiffer>
    <experiments>3</experiments>
</comment>
<comment type="interaction">
    <interactant intactId="EBI-742102">
        <id>Q8IYI6</id>
    </interactant>
    <interactant intactId="EBI-3928124">
        <id>Q96DF8</id>
        <label>ESS2</label>
    </interactant>
    <organismsDiffer>false</organismsDiffer>
    <experiments>3</experiments>
</comment>
<comment type="interaction">
    <interactant intactId="EBI-742102">
        <id>Q8IYI6</id>
    </interactant>
    <interactant intactId="EBI-355383">
        <id>Q96A65</id>
        <label>EXOC4</label>
    </interactant>
    <organismsDiffer>false</organismsDiffer>
    <experiments>7</experiments>
</comment>
<comment type="interaction">
    <interactant intactId="EBI-742102">
        <id>Q8IYI6</id>
    </interactant>
    <interactant intactId="EBI-19153639">
        <id>Q9NTX9</id>
        <label>FAM217B</label>
    </interactant>
    <organismsDiffer>false</organismsDiffer>
    <experiments>3</experiments>
</comment>
<comment type="interaction">
    <interactant intactId="EBI-742102">
        <id>Q8IYI6</id>
    </interactant>
    <interactant intactId="EBI-618309">
        <id>Q08379</id>
        <label>GOLGA2</label>
    </interactant>
    <organismsDiffer>false</organismsDiffer>
    <experiments>3</experiments>
</comment>
<comment type="interaction">
    <interactant intactId="EBI-742102">
        <id>Q8IYI6</id>
    </interactant>
    <interactant intactId="EBI-10962409">
        <id>Q6IC98</id>
        <label>GRAMD4</label>
    </interactant>
    <organismsDiffer>false</organismsDiffer>
    <experiments>3</experiments>
</comment>
<comment type="interaction">
    <interactant intactId="EBI-742102">
        <id>Q8IYI6</id>
    </interactant>
    <interactant intactId="EBI-2853321">
        <id>P29084</id>
        <label>GTF2E2</label>
    </interactant>
    <organismsDiffer>false</organismsDiffer>
    <experiments>5</experiments>
</comment>
<comment type="interaction">
    <interactant intactId="EBI-742102">
        <id>Q8IYI6</id>
    </interactant>
    <interactant intactId="EBI-8638439">
        <id>Q8IYA8</id>
        <label>IHO1</label>
    </interactant>
    <organismsDiffer>false</organismsDiffer>
    <experiments>3</experiments>
</comment>
<comment type="interaction">
    <interactant intactId="EBI-742102">
        <id>Q8IYI6</id>
    </interactant>
    <interactant intactId="EBI-747204">
        <id>Q9UKT9</id>
        <label>IKZF3</label>
    </interactant>
    <organismsDiffer>false</organismsDiffer>
    <experiments>7</experiments>
</comment>
<comment type="interaction">
    <interactant intactId="EBI-742102">
        <id>Q8IYI6</id>
    </interactant>
    <interactant intactId="EBI-2557660">
        <id>Q9ULR0</id>
        <label>ISY1</label>
    </interactant>
    <organismsDiffer>false</organismsDiffer>
    <experiments>3</experiments>
</comment>
<comment type="interaction">
    <interactant intactId="EBI-742102">
        <id>Q8IYI6</id>
    </interactant>
    <interactant intactId="EBI-18398632">
        <id>Q9ULR0-1</id>
        <label>ISY1</label>
    </interactant>
    <organismsDiffer>false</organismsDiffer>
    <experiments>3</experiments>
</comment>
<comment type="interaction">
    <interactant intactId="EBI-742102">
        <id>Q8IYI6</id>
    </interactant>
    <interactant intactId="EBI-10188326">
        <id>Q5T5P2-6</id>
        <label>KIAA1217</label>
    </interactant>
    <organismsDiffer>false</organismsDiffer>
    <experiments>3</experiments>
</comment>
<comment type="interaction">
    <interactant intactId="EBI-742102">
        <id>Q8IYI6</id>
    </interactant>
    <interactant intactId="EBI-14069005">
        <id>Q9BVG8-5</id>
        <label>KIFC3</label>
    </interactant>
    <organismsDiffer>false</organismsDiffer>
    <experiments>3</experiments>
</comment>
<comment type="interaction">
    <interactant intactId="EBI-742102">
        <id>Q8IYI6</id>
    </interactant>
    <interactant intactId="EBI-742756">
        <id>P08727</id>
        <label>KRT19</label>
    </interactant>
    <organismsDiffer>false</organismsDiffer>
    <experiments>4</experiments>
</comment>
<comment type="interaction">
    <interactant intactId="EBI-742102">
        <id>Q8IYI6</id>
    </interactant>
    <interactant intactId="EBI-948001">
        <id>Q15323</id>
        <label>KRT31</label>
    </interactant>
    <organismsDiffer>false</organismsDiffer>
    <experiments>3</experiments>
</comment>
<comment type="interaction">
    <interactant intactId="EBI-742102">
        <id>Q8IYI6</id>
    </interactant>
    <interactant intactId="EBI-1047093">
        <id>O76011</id>
        <label>KRT34</label>
    </interactant>
    <organismsDiffer>false</organismsDiffer>
    <experiments>3</experiments>
</comment>
<comment type="interaction">
    <interactant intactId="EBI-742102">
        <id>Q8IYI6</id>
    </interactant>
    <interactant intactId="EBI-11958506">
        <id>O76013-2</id>
        <label>KRT36</label>
    </interactant>
    <organismsDiffer>false</organismsDiffer>
    <experiments>4</experiments>
</comment>
<comment type="interaction">
    <interactant intactId="EBI-742102">
        <id>Q8IYI6</id>
    </interactant>
    <interactant intactId="EBI-2952745">
        <id>Q01546</id>
        <label>KRT76</label>
    </interactant>
    <organismsDiffer>false</organismsDiffer>
    <experiments>3</experiments>
</comment>
<comment type="interaction">
    <interactant intactId="EBI-742102">
        <id>Q8IYI6</id>
    </interactant>
    <interactant intactId="EBI-1216080">
        <id>Q9Y250</id>
        <label>LZTS1</label>
    </interactant>
    <organismsDiffer>false</organismsDiffer>
    <experiments>3</experiments>
</comment>
<comment type="interaction">
    <interactant intactId="EBI-742102">
        <id>Q8IYI6</id>
    </interactant>
    <interactant intactId="EBI-949983">
        <id>Q9H992</id>
        <label>MARCHF7</label>
    </interactant>
    <organismsDiffer>false</organismsDiffer>
    <experiments>3</experiments>
</comment>
<comment type="interaction">
    <interactant intactId="EBI-742102">
        <id>Q8IYI6</id>
    </interactant>
    <interactant intactId="EBI-12516603">
        <id>Q8WWY6</id>
        <label>MBD3L1</label>
    </interactant>
    <organismsDiffer>false</organismsDiffer>
    <experiments>3</experiments>
</comment>
<comment type="interaction">
    <interactant intactId="EBI-742102">
        <id>Q8IYI6</id>
    </interactant>
    <interactant intactId="EBI-10182361">
        <id>Q9NS73-5</id>
        <label>MBIP</label>
    </interactant>
    <organismsDiffer>false</organismsDiffer>
    <experiments>3</experiments>
</comment>
<comment type="interaction">
    <interactant intactId="EBI-742102">
        <id>Q8IYI6</id>
    </interactant>
    <interactant intactId="EBI-2548751">
        <id>Q8TD10</id>
        <label>MIPOL1</label>
    </interactant>
    <organismsDiffer>false</organismsDiffer>
    <experiments>3</experiments>
</comment>
<comment type="interaction">
    <interactant intactId="EBI-742102">
        <id>Q8IYI6</id>
    </interactant>
    <interactant intactId="EBI-11522433">
        <id>Q5JR59-3</id>
        <label>MTUS2</label>
    </interactant>
    <organismsDiffer>false</organismsDiffer>
    <experiments>3</experiments>
</comment>
<comment type="interaction">
    <interactant intactId="EBI-742102">
        <id>Q8IYI6</id>
    </interactant>
    <interactant intactId="EBI-5662487">
        <id>Q8TDC0</id>
        <label>MYOZ3</label>
    </interactant>
    <organismsDiffer>false</organismsDiffer>
    <experiments>3</experiments>
</comment>
<comment type="interaction">
    <interactant intactId="EBI-742102">
        <id>Q8IYI6</id>
    </interactant>
    <interactant intactId="EBI-8641936">
        <id>Q15742</id>
        <label>NAB2</label>
    </interactant>
    <organismsDiffer>false</organismsDiffer>
    <experiments>3</experiments>
</comment>
<comment type="interaction">
    <interactant intactId="EBI-742102">
        <id>Q8IYI6</id>
    </interactant>
    <interactant intactId="EBI-715849">
        <id>O14777</id>
        <label>NDC80</label>
    </interactant>
    <organismsDiffer>false</organismsDiffer>
    <experiments>3</experiments>
</comment>
<comment type="interaction">
    <interactant intactId="EBI-742102">
        <id>Q8IYI6</id>
    </interactant>
    <interactant intactId="EBI-741048">
        <id>Q7Z3B4</id>
        <label>NUP54</label>
    </interactant>
    <organismsDiffer>false</organismsDiffer>
    <experiments>3</experiments>
</comment>
<comment type="interaction">
    <interactant intactId="EBI-742102">
        <id>Q8IYI6</id>
    </interactant>
    <interactant intactId="EBI-10302990">
        <id>Q9BYU1</id>
        <label>PBX4</label>
    </interactant>
    <organismsDiffer>false</organismsDiffer>
    <experiments>3</experiments>
</comment>
<comment type="interaction">
    <interactant intactId="EBI-742102">
        <id>Q8IYI6</id>
    </interactant>
    <interactant intactId="EBI-11742977">
        <id>Q15154-3</id>
        <label>PCM1</label>
    </interactant>
    <organismsDiffer>false</organismsDiffer>
    <experiments>3</experiments>
</comment>
<comment type="interaction">
    <interactant intactId="EBI-742102">
        <id>Q8IYI6</id>
    </interactant>
    <interactant intactId="EBI-11986293">
        <id>P0CG20</id>
        <label>PRR35</label>
    </interactant>
    <organismsDiffer>false</organismsDiffer>
    <experiments>3</experiments>
</comment>
<comment type="interaction">
    <interactant intactId="EBI-742102">
        <id>Q8IYI6</id>
    </interactant>
    <interactant intactId="EBI-726876">
        <id>Q6NUQ1</id>
        <label>RINT1</label>
    </interactant>
    <organismsDiffer>false</organismsDiffer>
    <experiments>5</experiments>
</comment>
<comment type="interaction">
    <interactant intactId="EBI-742102">
        <id>Q8IYI6</id>
    </interactant>
    <interactant intactId="EBI-6257312">
        <id>Q9BVN2</id>
        <label>RUSC1</label>
    </interactant>
    <organismsDiffer>false</organismsDiffer>
    <experiments>3</experiments>
</comment>
<comment type="interaction">
    <interactant intactId="EBI-742102">
        <id>Q8IYI6</id>
    </interactant>
    <interactant intactId="EBI-12823227">
        <id>Q6ZMJ2-2</id>
        <label>SCARA5</label>
    </interactant>
    <organismsDiffer>false</organismsDiffer>
    <experiments>3</experiments>
</comment>
<comment type="interaction">
    <interactant intactId="EBI-742102">
        <id>Q8IYI6</id>
    </interactant>
    <interactant intactId="EBI-11915024">
        <id>Q16533</id>
        <label>SNAPC1</label>
    </interactant>
    <organismsDiffer>false</organismsDiffer>
    <experiments>3</experiments>
</comment>
<comment type="interaction">
    <interactant intactId="EBI-742102">
        <id>Q8IYI6</id>
    </interactant>
    <interactant intactId="EBI-725557">
        <id>Q9NZ72</id>
        <label>STMN3</label>
    </interactant>
    <organismsDiffer>false</organismsDiffer>
    <experiments>3</experiments>
</comment>
<comment type="interaction">
    <interactant intactId="EBI-742102">
        <id>Q8IYI6</id>
    </interactant>
    <interactant intactId="EBI-6872807">
        <id>Q8N0S2</id>
        <label>SYCE1</label>
    </interactant>
    <organismsDiffer>false</organismsDiffer>
    <experiments>3</experiments>
</comment>
<comment type="interaction">
    <interactant intactId="EBI-742102">
        <id>Q8IYI6</id>
    </interactant>
    <interactant intactId="EBI-745392">
        <id>Q9BSW7</id>
        <label>SYT17</label>
    </interactant>
    <organismsDiffer>false</organismsDiffer>
    <experiments>3</experiments>
</comment>
<comment type="interaction">
    <interactant intactId="EBI-742102">
        <id>Q8IYI6</id>
    </interactant>
    <interactant intactId="EBI-8787464">
        <id>Q9NU19</id>
        <label>TBC1D22B</label>
    </interactant>
    <organismsDiffer>false</organismsDiffer>
    <experiments>3</experiments>
</comment>
<comment type="interaction">
    <interactant intactId="EBI-742102">
        <id>Q8IYI6</id>
    </interactant>
    <interactant intactId="EBI-11952764">
        <id>Q99081-3</id>
        <label>TCF12</label>
    </interactant>
    <organismsDiffer>false</organismsDiffer>
    <experiments>3</experiments>
</comment>
<comment type="interaction">
    <interactant intactId="EBI-742102">
        <id>Q8IYI6</id>
    </interactant>
    <interactant intactId="EBI-13636688">
        <id>P15884-3</id>
        <label>TCF4</label>
    </interactant>
    <organismsDiffer>false</organismsDiffer>
    <experiments>3</experiments>
</comment>
<comment type="interaction">
    <interactant intactId="EBI-742102">
        <id>Q8IYI6</id>
    </interactant>
    <interactant intactId="EBI-1105213">
        <id>Q9UBB9</id>
        <label>TFIP11</label>
    </interactant>
    <organismsDiffer>false</organismsDiffer>
    <experiments>3</experiments>
</comment>
<comment type="interaction">
    <interactant intactId="EBI-742102">
        <id>Q8IYI6</id>
    </interactant>
    <interactant intactId="EBI-2820256">
        <id>Q14142</id>
        <label>TRIM14</label>
    </interactant>
    <organismsDiffer>false</organismsDiffer>
    <experiments>3</experiments>
</comment>
<comment type="interaction">
    <interactant intactId="EBI-742102">
        <id>Q8IYI6</id>
    </interactant>
    <interactant intactId="EBI-81290">
        <id>P19474</id>
        <label>TRIM21</label>
    </interactant>
    <organismsDiffer>false</organismsDiffer>
    <experiments>3</experiments>
</comment>
<comment type="interaction">
    <interactant intactId="EBI-742102">
        <id>Q8IYI6</id>
    </interactant>
    <interactant intactId="EBI-719493">
        <id>P14373</id>
        <label>TRIM27</label>
    </interactant>
    <organismsDiffer>false</organismsDiffer>
    <experiments>3</experiments>
</comment>
<comment type="interaction">
    <interactant intactId="EBI-742102">
        <id>Q8IYI6</id>
    </interactant>
    <interactant intactId="EBI-2130429">
        <id>Q9BYV2</id>
        <label>TRIM54</label>
    </interactant>
    <organismsDiffer>false</organismsDiffer>
    <experiments>3</experiments>
</comment>
<comment type="interaction">
    <interactant intactId="EBI-742102">
        <id>Q8IYI6</id>
    </interactant>
    <interactant intactId="EBI-1054584">
        <id>Q9BRT2</id>
        <label>UQCC2</label>
    </interactant>
    <organismsDiffer>false</organismsDiffer>
    <experiments>3</experiments>
</comment>
<comment type="interaction">
    <interactant intactId="EBI-742102">
        <id>Q8IYI6</id>
    </interactant>
    <interactant intactId="EBI-739895">
        <id>Q8N6Y0</id>
        <label>USHBP1</label>
    </interactant>
    <organismsDiffer>false</organismsDiffer>
    <experiments>5</experiments>
</comment>
<comment type="interaction">
    <interactant intactId="EBI-742102">
        <id>Q8IYI6</id>
    </interactant>
    <interactant intactId="EBI-11975223">
        <id>Q70EL1-9</id>
        <label>USP54</label>
    </interactant>
    <organismsDiffer>false</organismsDiffer>
    <experiments>3</experiments>
</comment>
<comment type="interaction">
    <interactant intactId="EBI-742102">
        <id>Q8IYI6</id>
    </interactant>
    <interactant intactId="EBI-17974829">
        <id>Q6GMQ7</id>
        <label>VPS16</label>
    </interactant>
    <organismsDiffer>false</organismsDiffer>
    <experiments>3</experiments>
</comment>
<comment type="interaction">
    <interactant intactId="EBI-742102">
        <id>Q8IYI6</id>
    </interactant>
    <interactant intactId="EBI-4400866">
        <id>Q9H9H4</id>
        <label>VPS37B</label>
    </interactant>
    <organismsDiffer>false</organismsDiffer>
    <experiments>3</experiments>
</comment>
<comment type="interaction">
    <interactant intactId="EBI-742102">
        <id>Q8IYI6</id>
    </interactant>
    <interactant intactId="EBI-6160405">
        <id>A8K0Z3</id>
        <label>WASHC1</label>
    </interactant>
    <organismsDiffer>false</organismsDiffer>
    <experiments>3</experiments>
</comment>
<comment type="interaction">
    <interactant intactId="EBI-742102">
        <id>Q8IYI6</id>
    </interactant>
    <interactant intactId="EBI-5458880">
        <id>Q96GY0</id>
        <label>ZC2HC1A</label>
    </interactant>
    <organismsDiffer>false</organismsDiffer>
    <experiments>3</experiments>
</comment>
<comment type="interaction">
    <interactant intactId="EBI-742102">
        <id>Q8IYI6</id>
    </interactant>
    <interactant intactId="EBI-12272076">
        <id>Q13360-2</id>
        <label>ZNF177</label>
    </interactant>
    <organismsDiffer>false</organismsDiffer>
    <experiments>3</experiments>
</comment>
<comment type="interaction">
    <interactant intactId="EBI-742102">
        <id>Q8IYI6</id>
    </interactant>
    <interactant intactId="EBI-11041653">
        <id>P13682</id>
        <label>ZNF35</label>
    </interactant>
    <organismsDiffer>false</organismsDiffer>
    <experiments>3</experiments>
</comment>
<comment type="interaction">
    <interactant intactId="EBI-742102">
        <id>Q8IYI6</id>
    </interactant>
    <interactant intactId="EBI-2555762">
        <id>Q969W8</id>
        <label>ZNF566</label>
    </interactant>
    <organismsDiffer>false</organismsDiffer>
    <experiments>3</experiments>
</comment>
<comment type="interaction">
    <interactant intactId="EBI-742102">
        <id>Q8IYI6</id>
    </interactant>
    <interactant intactId="EBI-13086230">
        <id>Q5EBL2</id>
        <label>ZNF628</label>
    </interactant>
    <organismsDiffer>false</organismsDiffer>
    <experiments>3</experiments>
</comment>
<comment type="interaction">
    <interactant intactId="EBI-742102">
        <id>Q8IYI6</id>
    </interactant>
    <interactant intactId="EBI-7252920">
        <id>Q8NAM6</id>
        <label>ZSCAN4</label>
    </interactant>
    <organismsDiffer>false</organismsDiffer>
    <experiments>3</experiments>
</comment>
<comment type="interaction">
    <interactant intactId="EBI-742102">
        <id>Q8IYI6</id>
    </interactant>
    <interactant intactId="EBI-17234977">
        <id>A0A1U9X8X8</id>
    </interactant>
    <organismsDiffer>false</organismsDiffer>
    <experiments>5</experiments>
</comment>
<comment type="subcellular location">
    <subcellularLocation>
        <location evidence="2">Cytoplasm</location>
    </subcellularLocation>
    <subcellularLocation>
        <location evidence="2">Cytoplasm</location>
        <location evidence="2">Perinuclear region</location>
    </subcellularLocation>
    <subcellularLocation>
        <location evidence="2">Cell projection</location>
        <location evidence="2">Growth cone</location>
    </subcellularLocation>
    <subcellularLocation>
        <location evidence="2">Cell projection</location>
    </subcellularLocation>
    <text evidence="1 2">Perinuclear in undifferentiated PC12 cells. Redistributes to growing neurites and growth cones during neuronal differentiation (By similarity). Binds lipids with phosphatidylinositol 3,4,5-trisphosphate groups (By similarity). Localizes at the leading edge of migrating cells (By similarity).</text>
</comment>
<comment type="disease" evidence="9">
    <disease id="DI-05953">
        <name>Neurodevelopmental disorder with microcephaly, seizures, and brain atrophy</name>
        <acronym>NEDMISB</acronym>
        <description>An autosomal recessive neurodevelopmental disorder characterized by severe global developmental delay, developmental regression with loss of milestones, severe microcephaly, and brain abnormalities, primarily cerebral atrophy and hypoplasia of the corpus callosum. Affected individuals develop seizures in the first year of life. Death in childhood may occur.</description>
        <dbReference type="MIM" id="619076"/>
    </disease>
    <text>The disease may be caused by variants affecting the gene represented in this entry.</text>
</comment>
<comment type="similarity">
    <text evidence="10">Belongs to the EXO84 family.</text>
</comment>
<accession>Q8IYI6</accession>
<accession>B3KU33</accession>
<accession>Q5TE82</accession>
<sequence length="725" mass="81799">MAMAMSDSGASRLRRQLESGGFEARLYVKQLSQQSDGDRDLQEHRQRIQALAEETAQNLKRNVYQNYRQFIETAREISYLESEMYQLSHLLTEQKSSLESIPLTLLPAAAAAGAAAASGGEEGVGGAGGRDHLRGQAGFFSTPGGASRDGSGPGEEGKQRTLTTLLEKVEGCRHLLETPGQYLVYNGDLVEYDADHMAQLQRVHGFLMNDCLLVATWLPQRRGMYRYNALYSLDGLAVVNVKDNPPMKDMFKLLMFPESRIFQAENAKIKREWLEVLEDTKRALSEKRRREQEEAAAPRGPPQVTSKATNPFEDDEEEEPAVPEVEEEKVDLSMEWIQELPEDLDVCIAQRDFEGAVDLLDKLNHYLEDKPSPPPVKELRAKVEERVRQLTEVLVFELSPDRSLRGGPKATRRAVSQLIRLGQCTKACELFLRNRAAAVHTAIRQLRIEGATLLYIHKLCHVFFTSLLETAREFEIDFAGTDSGCYSAFVVWARSAMGMFVDAFSKQVFDSKESLSTAAECVKVAKEHCQQLGDIGLDLTFIIHALLVKDIQGALHSYKEIIIEATKHRNSEEMWRRMNLMTPEALGKLKEEMKSCGVSNFEQYTGDDCWVNLSYTVVAFTKQTMGFLEEALKLYFPELHMVLLESLVEIILVAVQHVDYSLRCEQDPEKKAFIRQNASFLYETVLPVVEKRFEEGVGKPAKQLQDLRNASRLIRVNPESTTSVV</sequence>
<proteinExistence type="evidence at protein level"/>
<protein>
    <recommendedName>
        <fullName>Exocyst complex component 8</fullName>
    </recommendedName>
    <alternativeName>
        <fullName>Exocyst complex 84 kDa subunit</fullName>
    </alternativeName>
</protein>
<organism>
    <name type="scientific">Homo sapiens</name>
    <name type="common">Human</name>
    <dbReference type="NCBI Taxonomy" id="9606"/>
    <lineage>
        <taxon>Eukaryota</taxon>
        <taxon>Metazoa</taxon>
        <taxon>Chordata</taxon>
        <taxon>Craniata</taxon>
        <taxon>Vertebrata</taxon>
        <taxon>Euteleostomi</taxon>
        <taxon>Mammalia</taxon>
        <taxon>Eutheria</taxon>
        <taxon>Euarchontoglires</taxon>
        <taxon>Primates</taxon>
        <taxon>Haplorrhini</taxon>
        <taxon>Catarrhini</taxon>
        <taxon>Hominidae</taxon>
        <taxon>Homo</taxon>
    </lineage>
</organism>
<reference key="1">
    <citation type="journal article" date="2004" name="Nat. Genet.">
        <title>Complete sequencing and characterization of 21,243 full-length human cDNAs.</title>
        <authorList>
            <person name="Ota T."/>
            <person name="Suzuki Y."/>
            <person name="Nishikawa T."/>
            <person name="Otsuki T."/>
            <person name="Sugiyama T."/>
            <person name="Irie R."/>
            <person name="Wakamatsu A."/>
            <person name="Hayashi K."/>
            <person name="Sato H."/>
            <person name="Nagai K."/>
            <person name="Kimura K."/>
            <person name="Makita H."/>
            <person name="Sekine M."/>
            <person name="Obayashi M."/>
            <person name="Nishi T."/>
            <person name="Shibahara T."/>
            <person name="Tanaka T."/>
            <person name="Ishii S."/>
            <person name="Yamamoto J."/>
            <person name="Saito K."/>
            <person name="Kawai Y."/>
            <person name="Isono Y."/>
            <person name="Nakamura Y."/>
            <person name="Nagahari K."/>
            <person name="Murakami K."/>
            <person name="Yasuda T."/>
            <person name="Iwayanagi T."/>
            <person name="Wagatsuma M."/>
            <person name="Shiratori A."/>
            <person name="Sudo H."/>
            <person name="Hosoiri T."/>
            <person name="Kaku Y."/>
            <person name="Kodaira H."/>
            <person name="Kondo H."/>
            <person name="Sugawara M."/>
            <person name="Takahashi M."/>
            <person name="Kanda K."/>
            <person name="Yokoi T."/>
            <person name="Furuya T."/>
            <person name="Kikkawa E."/>
            <person name="Omura Y."/>
            <person name="Abe K."/>
            <person name="Kamihara K."/>
            <person name="Katsuta N."/>
            <person name="Sato K."/>
            <person name="Tanikawa M."/>
            <person name="Yamazaki M."/>
            <person name="Ninomiya K."/>
            <person name="Ishibashi T."/>
            <person name="Yamashita H."/>
            <person name="Murakawa K."/>
            <person name="Fujimori K."/>
            <person name="Tanai H."/>
            <person name="Kimata M."/>
            <person name="Watanabe M."/>
            <person name="Hiraoka S."/>
            <person name="Chiba Y."/>
            <person name="Ishida S."/>
            <person name="Ono Y."/>
            <person name="Takiguchi S."/>
            <person name="Watanabe S."/>
            <person name="Yosida M."/>
            <person name="Hotuta T."/>
            <person name="Kusano J."/>
            <person name="Kanehori K."/>
            <person name="Takahashi-Fujii A."/>
            <person name="Hara H."/>
            <person name="Tanase T.-O."/>
            <person name="Nomura Y."/>
            <person name="Togiya S."/>
            <person name="Komai F."/>
            <person name="Hara R."/>
            <person name="Takeuchi K."/>
            <person name="Arita M."/>
            <person name="Imose N."/>
            <person name="Musashino K."/>
            <person name="Yuuki H."/>
            <person name="Oshima A."/>
            <person name="Sasaki N."/>
            <person name="Aotsuka S."/>
            <person name="Yoshikawa Y."/>
            <person name="Matsunawa H."/>
            <person name="Ichihara T."/>
            <person name="Shiohata N."/>
            <person name="Sano S."/>
            <person name="Moriya S."/>
            <person name="Momiyama H."/>
            <person name="Satoh N."/>
            <person name="Takami S."/>
            <person name="Terashima Y."/>
            <person name="Suzuki O."/>
            <person name="Nakagawa S."/>
            <person name="Senoh A."/>
            <person name="Mizoguchi H."/>
            <person name="Goto Y."/>
            <person name="Shimizu F."/>
            <person name="Wakebe H."/>
            <person name="Hishigaki H."/>
            <person name="Watanabe T."/>
            <person name="Sugiyama A."/>
            <person name="Takemoto M."/>
            <person name="Kawakami B."/>
            <person name="Yamazaki M."/>
            <person name="Watanabe K."/>
            <person name="Kumagai A."/>
            <person name="Itakura S."/>
            <person name="Fukuzumi Y."/>
            <person name="Fujimori Y."/>
            <person name="Komiyama M."/>
            <person name="Tashiro H."/>
            <person name="Tanigami A."/>
            <person name="Fujiwara T."/>
            <person name="Ono T."/>
            <person name="Yamada K."/>
            <person name="Fujii Y."/>
            <person name="Ozaki K."/>
            <person name="Hirao M."/>
            <person name="Ohmori Y."/>
            <person name="Kawabata A."/>
            <person name="Hikiji T."/>
            <person name="Kobatake N."/>
            <person name="Inagaki H."/>
            <person name="Ikema Y."/>
            <person name="Okamoto S."/>
            <person name="Okitani R."/>
            <person name="Kawakami T."/>
            <person name="Noguchi S."/>
            <person name="Itoh T."/>
            <person name="Shigeta K."/>
            <person name="Senba T."/>
            <person name="Matsumura K."/>
            <person name="Nakajima Y."/>
            <person name="Mizuno T."/>
            <person name="Morinaga M."/>
            <person name="Sasaki M."/>
            <person name="Togashi T."/>
            <person name="Oyama M."/>
            <person name="Hata H."/>
            <person name="Watanabe M."/>
            <person name="Komatsu T."/>
            <person name="Mizushima-Sugano J."/>
            <person name="Satoh T."/>
            <person name="Shirai Y."/>
            <person name="Takahashi Y."/>
            <person name="Nakagawa K."/>
            <person name="Okumura K."/>
            <person name="Nagase T."/>
            <person name="Nomura N."/>
            <person name="Kikuchi H."/>
            <person name="Masuho Y."/>
            <person name="Yamashita R."/>
            <person name="Nakai K."/>
            <person name="Yada T."/>
            <person name="Nakamura Y."/>
            <person name="Ohara O."/>
            <person name="Isogai T."/>
            <person name="Sugano S."/>
        </authorList>
    </citation>
    <scope>NUCLEOTIDE SEQUENCE [LARGE SCALE MRNA]</scope>
    <source>
        <tissue>Tongue</tissue>
    </source>
</reference>
<reference key="2">
    <citation type="journal article" date="2006" name="Nature">
        <title>The DNA sequence and biological annotation of human chromosome 1.</title>
        <authorList>
            <person name="Gregory S.G."/>
            <person name="Barlow K.F."/>
            <person name="McLay K.E."/>
            <person name="Kaul R."/>
            <person name="Swarbreck D."/>
            <person name="Dunham A."/>
            <person name="Scott C.E."/>
            <person name="Howe K.L."/>
            <person name="Woodfine K."/>
            <person name="Spencer C.C.A."/>
            <person name="Jones M.C."/>
            <person name="Gillson C."/>
            <person name="Searle S."/>
            <person name="Zhou Y."/>
            <person name="Kokocinski F."/>
            <person name="McDonald L."/>
            <person name="Evans R."/>
            <person name="Phillips K."/>
            <person name="Atkinson A."/>
            <person name="Cooper R."/>
            <person name="Jones C."/>
            <person name="Hall R.E."/>
            <person name="Andrews T.D."/>
            <person name="Lloyd C."/>
            <person name="Ainscough R."/>
            <person name="Almeida J.P."/>
            <person name="Ambrose K.D."/>
            <person name="Anderson F."/>
            <person name="Andrew R.W."/>
            <person name="Ashwell R.I.S."/>
            <person name="Aubin K."/>
            <person name="Babbage A.K."/>
            <person name="Bagguley C.L."/>
            <person name="Bailey J."/>
            <person name="Beasley H."/>
            <person name="Bethel G."/>
            <person name="Bird C.P."/>
            <person name="Bray-Allen S."/>
            <person name="Brown J.Y."/>
            <person name="Brown A.J."/>
            <person name="Buckley D."/>
            <person name="Burton J."/>
            <person name="Bye J."/>
            <person name="Carder C."/>
            <person name="Chapman J.C."/>
            <person name="Clark S.Y."/>
            <person name="Clarke G."/>
            <person name="Clee C."/>
            <person name="Cobley V."/>
            <person name="Collier R.E."/>
            <person name="Corby N."/>
            <person name="Coville G.J."/>
            <person name="Davies J."/>
            <person name="Deadman R."/>
            <person name="Dunn M."/>
            <person name="Earthrowl M."/>
            <person name="Ellington A.G."/>
            <person name="Errington H."/>
            <person name="Frankish A."/>
            <person name="Frankland J."/>
            <person name="French L."/>
            <person name="Garner P."/>
            <person name="Garnett J."/>
            <person name="Gay L."/>
            <person name="Ghori M.R.J."/>
            <person name="Gibson R."/>
            <person name="Gilby L.M."/>
            <person name="Gillett W."/>
            <person name="Glithero R.J."/>
            <person name="Grafham D.V."/>
            <person name="Griffiths C."/>
            <person name="Griffiths-Jones S."/>
            <person name="Grocock R."/>
            <person name="Hammond S."/>
            <person name="Harrison E.S.I."/>
            <person name="Hart E."/>
            <person name="Haugen E."/>
            <person name="Heath P.D."/>
            <person name="Holmes S."/>
            <person name="Holt K."/>
            <person name="Howden P.J."/>
            <person name="Hunt A.R."/>
            <person name="Hunt S.E."/>
            <person name="Hunter G."/>
            <person name="Isherwood J."/>
            <person name="James R."/>
            <person name="Johnson C."/>
            <person name="Johnson D."/>
            <person name="Joy A."/>
            <person name="Kay M."/>
            <person name="Kershaw J.K."/>
            <person name="Kibukawa M."/>
            <person name="Kimberley A.M."/>
            <person name="King A."/>
            <person name="Knights A.J."/>
            <person name="Lad H."/>
            <person name="Laird G."/>
            <person name="Lawlor S."/>
            <person name="Leongamornlert D.A."/>
            <person name="Lloyd D.M."/>
            <person name="Loveland J."/>
            <person name="Lovell J."/>
            <person name="Lush M.J."/>
            <person name="Lyne R."/>
            <person name="Martin S."/>
            <person name="Mashreghi-Mohammadi M."/>
            <person name="Matthews L."/>
            <person name="Matthews N.S.W."/>
            <person name="McLaren S."/>
            <person name="Milne S."/>
            <person name="Mistry S."/>
            <person name="Moore M.J.F."/>
            <person name="Nickerson T."/>
            <person name="O'Dell C.N."/>
            <person name="Oliver K."/>
            <person name="Palmeiri A."/>
            <person name="Palmer S.A."/>
            <person name="Parker A."/>
            <person name="Patel D."/>
            <person name="Pearce A.V."/>
            <person name="Peck A.I."/>
            <person name="Pelan S."/>
            <person name="Phelps K."/>
            <person name="Phillimore B.J."/>
            <person name="Plumb R."/>
            <person name="Rajan J."/>
            <person name="Raymond C."/>
            <person name="Rouse G."/>
            <person name="Saenphimmachak C."/>
            <person name="Sehra H.K."/>
            <person name="Sheridan E."/>
            <person name="Shownkeen R."/>
            <person name="Sims S."/>
            <person name="Skuce C.D."/>
            <person name="Smith M."/>
            <person name="Steward C."/>
            <person name="Subramanian S."/>
            <person name="Sycamore N."/>
            <person name="Tracey A."/>
            <person name="Tromans A."/>
            <person name="Van Helmond Z."/>
            <person name="Wall M."/>
            <person name="Wallis J.M."/>
            <person name="White S."/>
            <person name="Whitehead S.L."/>
            <person name="Wilkinson J.E."/>
            <person name="Willey D.L."/>
            <person name="Williams H."/>
            <person name="Wilming L."/>
            <person name="Wray P.W."/>
            <person name="Wu Z."/>
            <person name="Coulson A."/>
            <person name="Vaudin M."/>
            <person name="Sulston J.E."/>
            <person name="Durbin R.M."/>
            <person name="Hubbard T."/>
            <person name="Wooster R."/>
            <person name="Dunham I."/>
            <person name="Carter N.P."/>
            <person name="McVean G."/>
            <person name="Ross M.T."/>
            <person name="Harrow J."/>
            <person name="Olson M.V."/>
            <person name="Beck S."/>
            <person name="Rogers J."/>
            <person name="Bentley D.R."/>
        </authorList>
    </citation>
    <scope>NUCLEOTIDE SEQUENCE [LARGE SCALE GENOMIC DNA]</scope>
</reference>
<reference key="3">
    <citation type="submission" date="2005-07" db="EMBL/GenBank/DDBJ databases">
        <authorList>
            <person name="Mural R.J."/>
            <person name="Istrail S."/>
            <person name="Sutton G.G."/>
            <person name="Florea L."/>
            <person name="Halpern A.L."/>
            <person name="Mobarry C.M."/>
            <person name="Lippert R."/>
            <person name="Walenz B."/>
            <person name="Shatkay H."/>
            <person name="Dew I."/>
            <person name="Miller J.R."/>
            <person name="Flanigan M.J."/>
            <person name="Edwards N.J."/>
            <person name="Bolanos R."/>
            <person name="Fasulo D."/>
            <person name="Halldorsson B.V."/>
            <person name="Hannenhalli S."/>
            <person name="Turner R."/>
            <person name="Yooseph S."/>
            <person name="Lu F."/>
            <person name="Nusskern D.R."/>
            <person name="Shue B.C."/>
            <person name="Zheng X.H."/>
            <person name="Zhong F."/>
            <person name="Delcher A.L."/>
            <person name="Huson D.H."/>
            <person name="Kravitz S.A."/>
            <person name="Mouchard L."/>
            <person name="Reinert K."/>
            <person name="Remington K.A."/>
            <person name="Clark A.G."/>
            <person name="Waterman M.S."/>
            <person name="Eichler E.E."/>
            <person name="Adams M.D."/>
            <person name="Hunkapiller M.W."/>
            <person name="Myers E.W."/>
            <person name="Venter J.C."/>
        </authorList>
    </citation>
    <scope>NUCLEOTIDE SEQUENCE [LARGE SCALE GENOMIC DNA]</scope>
</reference>
<reference key="4">
    <citation type="journal article" date="2004" name="Genome Res.">
        <title>The status, quality, and expansion of the NIH full-length cDNA project: the Mammalian Gene Collection (MGC).</title>
        <authorList>
            <consortium name="The MGC Project Team"/>
        </authorList>
    </citation>
    <scope>NUCLEOTIDE SEQUENCE [LARGE SCALE MRNA]</scope>
    <source>
        <tissue>Lymph</tissue>
    </source>
</reference>
<reference key="5">
    <citation type="journal article" date="2003" name="J. Biol. Chem.">
        <title>Ral GTPases regulate exocyst assembly through dual subunit interactions.</title>
        <authorList>
            <person name="Moskalenko S."/>
            <person name="Tong C."/>
            <person name="Rosse C."/>
            <person name="Mirey G."/>
            <person name="Formstecher E."/>
            <person name="Daviet L."/>
            <person name="Camonis J."/>
            <person name="White M.A."/>
        </authorList>
    </citation>
    <scope>INTERACTION WITH EXOC2; RALA AND RALB</scope>
</reference>
<reference key="6">
    <citation type="journal article" date="2008" name="EMBO J.">
        <title>Distinct roles of RalA and RalB in the progression of cytokinesis are supported by distinct RalGEFs.</title>
        <authorList>
            <person name="Cascone I."/>
            <person name="Selimoglu R."/>
            <person name="Ozdemir C."/>
            <person name="Del Nery E."/>
            <person name="Yeaman C."/>
            <person name="White M."/>
            <person name="Camonis J."/>
        </authorList>
    </citation>
    <scope>INTERACTION WITH RALA AND RALB</scope>
</reference>
<reference key="7">
    <citation type="journal article" date="2008" name="Proc. Natl. Acad. Sci. U.S.A.">
        <title>A quantitative atlas of mitotic phosphorylation.</title>
        <authorList>
            <person name="Dephoure N."/>
            <person name="Zhou C."/>
            <person name="Villen J."/>
            <person name="Beausoleil S.A."/>
            <person name="Bakalarski C.E."/>
            <person name="Elledge S.J."/>
            <person name="Gygi S.P."/>
        </authorList>
    </citation>
    <scope>PHOSPHORYLATION [LARGE SCALE ANALYSIS] AT THR-142</scope>
    <scope>IDENTIFICATION BY MASS SPECTROMETRY [LARGE SCALE ANALYSIS]</scope>
    <source>
        <tissue>Cervix carcinoma</tissue>
    </source>
</reference>
<reference key="8">
    <citation type="journal article" date="2011" name="BMC Syst. Biol.">
        <title>Initial characterization of the human central proteome.</title>
        <authorList>
            <person name="Burkard T.R."/>
            <person name="Planyavsky M."/>
            <person name="Kaupe I."/>
            <person name="Breitwieser F.P."/>
            <person name="Buerckstuemmer T."/>
            <person name="Bennett K.L."/>
            <person name="Superti-Furga G."/>
            <person name="Colinge J."/>
        </authorList>
    </citation>
    <scope>IDENTIFICATION BY MASS SPECTROMETRY [LARGE SCALE ANALYSIS]</scope>
</reference>
<reference key="9">
    <citation type="journal article" date="2011" name="Mol. Cell">
        <title>SH3BP1, an exocyst-associated RhoGAP, inactivates Rac1 at the front to drive cell motility.</title>
        <authorList>
            <person name="Parrini M.C."/>
            <person name="Sadou-Dubourgnoux A."/>
            <person name="Aoki K."/>
            <person name="Kunida K."/>
            <person name="Biondini M."/>
            <person name="Hatzoglou A."/>
            <person name="Poullet P."/>
            <person name="Formstecher E."/>
            <person name="Yeaman C."/>
            <person name="Matsuda M."/>
            <person name="Rosse C."/>
            <person name="Camonis J."/>
        </authorList>
    </citation>
    <scope>INTERACTION WITH SH3BP1</scope>
</reference>
<reference key="10">
    <citation type="journal article" date="2013" name="J. Proteome Res.">
        <title>Toward a comprehensive characterization of a human cancer cell phosphoproteome.</title>
        <authorList>
            <person name="Zhou H."/>
            <person name="Di Palma S."/>
            <person name="Preisinger C."/>
            <person name="Peng M."/>
            <person name="Polat A.N."/>
            <person name="Heck A.J."/>
            <person name="Mohammed S."/>
        </authorList>
    </citation>
    <scope>PHOSPHORYLATION [LARGE SCALE ANALYSIS] AT SER-19</scope>
    <scope>IDENTIFICATION BY MASS SPECTROMETRY [LARGE SCALE ANALYSIS]</scope>
    <source>
        <tissue>Cervix carcinoma</tissue>
    </source>
</reference>
<reference key="11">
    <citation type="journal article" date="2012" name="Sci. Transl. Med.">
        <title>Exome sequencing can improve diagnosis and alter patient management.</title>
        <authorList>
            <person name="Dixon-Salazar T.J."/>
            <person name="Silhavy J.L."/>
            <person name="Udpa N."/>
            <person name="Schroth J."/>
            <person name="Bielas S."/>
            <person name="Schaffer A.E."/>
            <person name="Olvera J."/>
            <person name="Bafna V."/>
            <person name="Zaki M.S."/>
            <person name="Abdel-Salam G.H."/>
            <person name="Mansour L.A."/>
            <person name="Selim L."/>
            <person name="Abdel-Hadi S."/>
            <person name="Marzouki N."/>
            <person name="Ben-Omran T."/>
            <person name="Al-Saana N.A."/>
            <person name="Sonmez F.M."/>
            <person name="Celep F."/>
            <person name="Azam M."/>
            <person name="Hill K.J."/>
            <person name="Collazo A."/>
            <person name="Fenstermaker A.G."/>
            <person name="Novarino G."/>
            <person name="Akizu N."/>
            <person name="Garimella K.V."/>
            <person name="Sougnez C."/>
            <person name="Russ C."/>
            <person name="Gabriel S.B."/>
            <person name="Gleeson J.G."/>
        </authorList>
    </citation>
    <scope>VARIANT GLY-265</scope>
</reference>
<reference key="12">
    <citation type="journal article" date="2020" name="Genet. Med.">
        <title>Regulation of human cerebral cortical development by EXOC7 and EXOC8, components of the exocyst complex, and roles in neural progenitor cell proliferation and survival.</title>
        <authorList>
            <person name="Coulter M.E."/>
            <person name="Musaev D."/>
            <person name="DeGennaro E.M."/>
            <person name="Zhang X."/>
            <person name="Henke K."/>
            <person name="James K.N."/>
            <person name="Smith R.S."/>
            <person name="Hill R.S."/>
            <person name="Partlow J.N."/>
            <person name="Al-Saffar M."/>
            <person name="Kamumbu A.S."/>
            <person name="Hatem N."/>
            <person name="Barkovich A.J."/>
            <person name="Aziza J."/>
            <person name="Chassaing N."/>
            <person name="Zaki M.S."/>
            <person name="Sultan T."/>
            <person name="Burglen L."/>
            <person name="Rajab A."/>
            <person name="Al-Gazali L."/>
            <person name="Mochida G.H."/>
            <person name="Harris M.P."/>
            <person name="Gleeson J.G."/>
            <person name="Walsh C.A."/>
        </authorList>
    </citation>
    <scope>INVOLVEMENT IN NEDMISB</scope>
</reference>
<feature type="chain" id="PRO_0000227550" description="Exocyst complex component 8">
    <location>
        <begin position="1"/>
        <end position="725"/>
    </location>
</feature>
<feature type="domain" description="PH" evidence="3">
    <location>
        <begin position="182"/>
        <end position="282"/>
    </location>
</feature>
<feature type="region of interest" description="Disordered" evidence="4">
    <location>
        <begin position="137"/>
        <end position="159"/>
    </location>
</feature>
<feature type="region of interest" description="Disordered" evidence="4">
    <location>
        <begin position="285"/>
        <end position="328"/>
    </location>
</feature>
<feature type="compositionally biased region" description="Acidic residues" evidence="4">
    <location>
        <begin position="312"/>
        <end position="328"/>
    </location>
</feature>
<feature type="modified residue" description="Phosphoserine" evidence="12">
    <location>
        <position position="19"/>
    </location>
</feature>
<feature type="modified residue" description="Phosphothreonine" evidence="11">
    <location>
        <position position="142"/>
    </location>
</feature>
<feature type="sequence variant" id="VAR_082196" description="Found in a patient with Joubert syndrome; uncertain significance; dbSNP:rs483352868." evidence="8">
    <original>E</original>
    <variation>G</variation>
    <location>
        <position position="265"/>
    </location>
</feature>
<keyword id="KW-0966">Cell projection</keyword>
<keyword id="KW-0963">Cytoplasm</keyword>
<keyword id="KW-0225">Disease variant</keyword>
<keyword id="KW-0887">Epilepsy</keyword>
<keyword id="KW-0268">Exocytosis</keyword>
<keyword id="KW-0597">Phosphoprotein</keyword>
<keyword id="KW-0653">Protein transport</keyword>
<keyword id="KW-1267">Proteomics identification</keyword>
<keyword id="KW-1185">Reference proteome</keyword>
<keyword id="KW-0813">Transport</keyword>
<gene>
    <name type="primary">EXOC8</name>
</gene>